<dbReference type="EMBL" id="CP000517">
    <property type="protein sequence ID" value="ABX26544.1"/>
    <property type="molecule type" value="Genomic_DNA"/>
</dbReference>
<dbReference type="RefSeq" id="WP_003625794.1">
    <property type="nucleotide sequence ID" value="NC_010080.1"/>
</dbReference>
<dbReference type="SMR" id="A8YXL3"/>
<dbReference type="GeneID" id="83725539"/>
<dbReference type="KEGG" id="lhe:lhv_0320"/>
<dbReference type="eggNOG" id="COG0255">
    <property type="taxonomic scope" value="Bacteria"/>
</dbReference>
<dbReference type="HOGENOM" id="CLU_158491_5_2_9"/>
<dbReference type="Proteomes" id="UP000000790">
    <property type="component" value="Chromosome"/>
</dbReference>
<dbReference type="GO" id="GO:0022625">
    <property type="term" value="C:cytosolic large ribosomal subunit"/>
    <property type="evidence" value="ECO:0007669"/>
    <property type="project" value="TreeGrafter"/>
</dbReference>
<dbReference type="GO" id="GO:0003735">
    <property type="term" value="F:structural constituent of ribosome"/>
    <property type="evidence" value="ECO:0007669"/>
    <property type="project" value="InterPro"/>
</dbReference>
<dbReference type="GO" id="GO:0006412">
    <property type="term" value="P:translation"/>
    <property type="evidence" value="ECO:0007669"/>
    <property type="project" value="UniProtKB-UniRule"/>
</dbReference>
<dbReference type="CDD" id="cd00427">
    <property type="entry name" value="Ribosomal_L29_HIP"/>
    <property type="match status" value="1"/>
</dbReference>
<dbReference type="FunFam" id="1.10.287.310:FF:000001">
    <property type="entry name" value="50S ribosomal protein L29"/>
    <property type="match status" value="1"/>
</dbReference>
<dbReference type="Gene3D" id="1.10.287.310">
    <property type="match status" value="1"/>
</dbReference>
<dbReference type="HAMAP" id="MF_00374">
    <property type="entry name" value="Ribosomal_uL29"/>
    <property type="match status" value="1"/>
</dbReference>
<dbReference type="InterPro" id="IPR050063">
    <property type="entry name" value="Ribosomal_protein_uL29"/>
</dbReference>
<dbReference type="InterPro" id="IPR001854">
    <property type="entry name" value="Ribosomal_uL29"/>
</dbReference>
<dbReference type="InterPro" id="IPR018254">
    <property type="entry name" value="Ribosomal_uL29_CS"/>
</dbReference>
<dbReference type="InterPro" id="IPR036049">
    <property type="entry name" value="Ribosomal_uL29_sf"/>
</dbReference>
<dbReference type="NCBIfam" id="TIGR00012">
    <property type="entry name" value="L29"/>
    <property type="match status" value="1"/>
</dbReference>
<dbReference type="PANTHER" id="PTHR10916">
    <property type="entry name" value="60S RIBOSOMAL PROTEIN L35/50S RIBOSOMAL PROTEIN L29"/>
    <property type="match status" value="1"/>
</dbReference>
<dbReference type="PANTHER" id="PTHR10916:SF0">
    <property type="entry name" value="LARGE RIBOSOMAL SUBUNIT PROTEIN UL29C"/>
    <property type="match status" value="1"/>
</dbReference>
<dbReference type="Pfam" id="PF00831">
    <property type="entry name" value="Ribosomal_L29"/>
    <property type="match status" value="1"/>
</dbReference>
<dbReference type="SUPFAM" id="SSF46561">
    <property type="entry name" value="Ribosomal protein L29 (L29p)"/>
    <property type="match status" value="1"/>
</dbReference>
<dbReference type="PROSITE" id="PS00579">
    <property type="entry name" value="RIBOSOMAL_L29"/>
    <property type="match status" value="1"/>
</dbReference>
<reference key="1">
    <citation type="journal article" date="2008" name="J. Bacteriol.">
        <title>Genome sequence of Lactobacillus helveticus: an organism distinguished by selective gene loss and IS element expansion.</title>
        <authorList>
            <person name="Callanan M."/>
            <person name="Kaleta P."/>
            <person name="O'Callaghan J."/>
            <person name="O'Sullivan O."/>
            <person name="Jordan K."/>
            <person name="McAuliffe O."/>
            <person name="Sangrador-Vegas A."/>
            <person name="Slattery L."/>
            <person name="Fitzgerald G.F."/>
            <person name="Beresford T."/>
            <person name="Ross R.P."/>
        </authorList>
    </citation>
    <scope>NUCLEOTIDE SEQUENCE [LARGE SCALE GENOMIC DNA]</scope>
    <source>
        <strain>DPC 4571</strain>
    </source>
</reference>
<protein>
    <recommendedName>
        <fullName evidence="1">Large ribosomal subunit protein uL29</fullName>
    </recommendedName>
    <alternativeName>
        <fullName evidence="2">50S ribosomal protein L29</fullName>
    </alternativeName>
</protein>
<gene>
    <name evidence="1" type="primary">rpmC</name>
    <name type="ordered locus">lhv_0320</name>
</gene>
<comment type="similarity">
    <text evidence="1">Belongs to the universal ribosomal protein uL29 family.</text>
</comment>
<name>RL29_LACH4</name>
<accession>A8YXL3</accession>
<evidence type="ECO:0000255" key="1">
    <source>
        <dbReference type="HAMAP-Rule" id="MF_00374"/>
    </source>
</evidence>
<evidence type="ECO:0000305" key="2"/>
<feature type="chain" id="PRO_1000072144" description="Large ribosomal subunit protein uL29">
    <location>
        <begin position="1"/>
        <end position="65"/>
    </location>
</feature>
<keyword id="KW-0687">Ribonucleoprotein</keyword>
<keyword id="KW-0689">Ribosomal protein</keyword>
<sequence length="65" mass="7638">MKAKDIRALTTDQMLEKEKQYKEELFNLRFQQATGQLENTARLSKVRKNIARIKTILSEKALENN</sequence>
<proteinExistence type="inferred from homology"/>
<organism>
    <name type="scientific">Lactobacillus helveticus (strain DPC 4571)</name>
    <dbReference type="NCBI Taxonomy" id="405566"/>
    <lineage>
        <taxon>Bacteria</taxon>
        <taxon>Bacillati</taxon>
        <taxon>Bacillota</taxon>
        <taxon>Bacilli</taxon>
        <taxon>Lactobacillales</taxon>
        <taxon>Lactobacillaceae</taxon>
        <taxon>Lactobacillus</taxon>
    </lineage>
</organism>